<keyword id="KW-0028">Amino-acid biosynthesis</keyword>
<keyword id="KW-0963">Cytoplasm</keyword>
<keyword id="KW-0368">Histidine biosynthesis</keyword>
<keyword id="KW-0456">Lyase</keyword>
<keyword id="KW-1185">Reference proteome</keyword>
<name>HIS7_PHEZH</name>
<proteinExistence type="inferred from homology"/>
<accession>B4RBJ4</accession>
<organism>
    <name type="scientific">Phenylobacterium zucineum (strain HLK1)</name>
    <dbReference type="NCBI Taxonomy" id="450851"/>
    <lineage>
        <taxon>Bacteria</taxon>
        <taxon>Pseudomonadati</taxon>
        <taxon>Pseudomonadota</taxon>
        <taxon>Alphaproteobacteria</taxon>
        <taxon>Caulobacterales</taxon>
        <taxon>Caulobacteraceae</taxon>
        <taxon>Phenylobacterium</taxon>
    </lineage>
</organism>
<protein>
    <recommendedName>
        <fullName evidence="1">Imidazoleglycerol-phosphate dehydratase</fullName>
        <shortName evidence="1">IGPD</shortName>
        <ecNumber evidence="1">4.2.1.19</ecNumber>
    </recommendedName>
</protein>
<dbReference type="EC" id="4.2.1.19" evidence="1"/>
<dbReference type="EMBL" id="CP000747">
    <property type="protein sequence ID" value="ACG76454.1"/>
    <property type="molecule type" value="Genomic_DNA"/>
</dbReference>
<dbReference type="RefSeq" id="WP_012520602.1">
    <property type="nucleotide sequence ID" value="NC_011144.1"/>
</dbReference>
<dbReference type="SMR" id="B4RBJ4"/>
<dbReference type="STRING" id="450851.PHZ_c0040"/>
<dbReference type="KEGG" id="pzu:PHZ_c0040"/>
<dbReference type="eggNOG" id="COG0131">
    <property type="taxonomic scope" value="Bacteria"/>
</dbReference>
<dbReference type="HOGENOM" id="CLU_044308_2_0_5"/>
<dbReference type="OrthoDB" id="9813612at2"/>
<dbReference type="UniPathway" id="UPA00031">
    <property type="reaction ID" value="UER00011"/>
</dbReference>
<dbReference type="Proteomes" id="UP000001868">
    <property type="component" value="Chromosome"/>
</dbReference>
<dbReference type="GO" id="GO:0005737">
    <property type="term" value="C:cytoplasm"/>
    <property type="evidence" value="ECO:0007669"/>
    <property type="project" value="UniProtKB-SubCell"/>
</dbReference>
<dbReference type="GO" id="GO:0004424">
    <property type="term" value="F:imidazoleglycerol-phosphate dehydratase activity"/>
    <property type="evidence" value="ECO:0007669"/>
    <property type="project" value="UniProtKB-UniRule"/>
</dbReference>
<dbReference type="GO" id="GO:0000105">
    <property type="term" value="P:L-histidine biosynthetic process"/>
    <property type="evidence" value="ECO:0007669"/>
    <property type="project" value="UniProtKB-UniRule"/>
</dbReference>
<dbReference type="CDD" id="cd07914">
    <property type="entry name" value="IGPD"/>
    <property type="match status" value="1"/>
</dbReference>
<dbReference type="FunFam" id="3.30.230.40:FF:000001">
    <property type="entry name" value="Imidazoleglycerol-phosphate dehydratase HisB"/>
    <property type="match status" value="1"/>
</dbReference>
<dbReference type="FunFam" id="3.30.230.40:FF:000003">
    <property type="entry name" value="Imidazoleglycerol-phosphate dehydratase HisB"/>
    <property type="match status" value="1"/>
</dbReference>
<dbReference type="Gene3D" id="3.30.230.40">
    <property type="entry name" value="Imidazole glycerol phosphate dehydratase, domain 1"/>
    <property type="match status" value="2"/>
</dbReference>
<dbReference type="HAMAP" id="MF_00076">
    <property type="entry name" value="HisB"/>
    <property type="match status" value="1"/>
</dbReference>
<dbReference type="InterPro" id="IPR038494">
    <property type="entry name" value="IGPD_sf"/>
</dbReference>
<dbReference type="InterPro" id="IPR000807">
    <property type="entry name" value="ImidazoleglycerolP_deHydtase"/>
</dbReference>
<dbReference type="InterPro" id="IPR020565">
    <property type="entry name" value="ImidazoleglycerP_deHydtase_CS"/>
</dbReference>
<dbReference type="InterPro" id="IPR020568">
    <property type="entry name" value="Ribosomal_Su5_D2-typ_SF"/>
</dbReference>
<dbReference type="NCBIfam" id="NF002109">
    <property type="entry name" value="PRK00951.1-5"/>
    <property type="match status" value="1"/>
</dbReference>
<dbReference type="NCBIfam" id="NF002111">
    <property type="entry name" value="PRK00951.2-1"/>
    <property type="match status" value="1"/>
</dbReference>
<dbReference type="NCBIfam" id="NF002114">
    <property type="entry name" value="PRK00951.2-4"/>
    <property type="match status" value="1"/>
</dbReference>
<dbReference type="PANTHER" id="PTHR23133:SF2">
    <property type="entry name" value="IMIDAZOLEGLYCEROL-PHOSPHATE DEHYDRATASE"/>
    <property type="match status" value="1"/>
</dbReference>
<dbReference type="PANTHER" id="PTHR23133">
    <property type="entry name" value="IMIDAZOLEGLYCEROL-PHOSPHATE DEHYDRATASE HIS7"/>
    <property type="match status" value="1"/>
</dbReference>
<dbReference type="Pfam" id="PF00475">
    <property type="entry name" value="IGPD"/>
    <property type="match status" value="1"/>
</dbReference>
<dbReference type="SUPFAM" id="SSF54211">
    <property type="entry name" value="Ribosomal protein S5 domain 2-like"/>
    <property type="match status" value="2"/>
</dbReference>
<dbReference type="PROSITE" id="PS00954">
    <property type="entry name" value="IGP_DEHYDRATASE_1"/>
    <property type="match status" value="1"/>
</dbReference>
<dbReference type="PROSITE" id="PS00955">
    <property type="entry name" value="IGP_DEHYDRATASE_2"/>
    <property type="match status" value="1"/>
</dbReference>
<feature type="chain" id="PRO_1000092706" description="Imidazoleglycerol-phosphate dehydratase">
    <location>
        <begin position="1"/>
        <end position="196"/>
    </location>
</feature>
<gene>
    <name evidence="1" type="primary">hisB</name>
    <name type="ordered locus">PHZ_c0040</name>
</gene>
<sequence>MSRTAEVRRDTKETQIRVWVDLDGTGASEVSTGVGFFDHMLDSFARHGGFDLKVETKGDLHIDMHHTVEDTGIVLGQAIKESLDGFKGIRRFGHAYIPMDETLSRCAIDLSNRPYLIWKTDFRTPKVGDMDTELFKEFHHAFAMNAGACVHLECLYGTNSHHIAESGFKALARALRQAVELDPKTHGHAPSTKGVL</sequence>
<evidence type="ECO:0000255" key="1">
    <source>
        <dbReference type="HAMAP-Rule" id="MF_00076"/>
    </source>
</evidence>
<comment type="catalytic activity">
    <reaction evidence="1">
        <text>D-erythro-1-(imidazol-4-yl)glycerol 3-phosphate = 3-(imidazol-4-yl)-2-oxopropyl phosphate + H2O</text>
        <dbReference type="Rhea" id="RHEA:11040"/>
        <dbReference type="ChEBI" id="CHEBI:15377"/>
        <dbReference type="ChEBI" id="CHEBI:57766"/>
        <dbReference type="ChEBI" id="CHEBI:58278"/>
        <dbReference type="EC" id="4.2.1.19"/>
    </reaction>
</comment>
<comment type="pathway">
    <text evidence="1">Amino-acid biosynthesis; L-histidine biosynthesis; L-histidine from 5-phospho-alpha-D-ribose 1-diphosphate: step 6/9.</text>
</comment>
<comment type="subcellular location">
    <subcellularLocation>
        <location evidence="1">Cytoplasm</location>
    </subcellularLocation>
</comment>
<comment type="similarity">
    <text evidence="1">Belongs to the imidazoleglycerol-phosphate dehydratase family.</text>
</comment>
<reference key="1">
    <citation type="journal article" date="2008" name="BMC Genomics">
        <title>Complete genome of Phenylobacterium zucineum - a novel facultative intracellular bacterium isolated from human erythroleukemia cell line K562.</title>
        <authorList>
            <person name="Luo Y."/>
            <person name="Xu X."/>
            <person name="Ding Z."/>
            <person name="Liu Z."/>
            <person name="Zhang B."/>
            <person name="Yan Z."/>
            <person name="Sun J."/>
            <person name="Hu S."/>
            <person name="Hu X."/>
        </authorList>
    </citation>
    <scope>NUCLEOTIDE SEQUENCE [LARGE SCALE GENOMIC DNA]</scope>
    <source>
        <strain>HLK1</strain>
    </source>
</reference>